<protein>
    <recommendedName>
        <fullName evidence="1">3-methyl-2-oxobutanoate hydroxymethyltransferase 2</fullName>
        <ecNumber evidence="1">2.1.2.11</ecNumber>
    </recommendedName>
    <alternativeName>
        <fullName evidence="1">Ketopantoate hydroxymethyltransferase 2</fullName>
        <shortName evidence="1">KPHMT 2</shortName>
    </alternativeName>
</protein>
<organism>
    <name type="scientific">Burkholderia cenocepacia (strain HI2424)</name>
    <dbReference type="NCBI Taxonomy" id="331272"/>
    <lineage>
        <taxon>Bacteria</taxon>
        <taxon>Pseudomonadati</taxon>
        <taxon>Pseudomonadota</taxon>
        <taxon>Betaproteobacteria</taxon>
        <taxon>Burkholderiales</taxon>
        <taxon>Burkholderiaceae</taxon>
        <taxon>Burkholderia</taxon>
        <taxon>Burkholderia cepacia complex</taxon>
    </lineage>
</organism>
<keyword id="KW-0963">Cytoplasm</keyword>
<keyword id="KW-0460">Magnesium</keyword>
<keyword id="KW-0479">Metal-binding</keyword>
<keyword id="KW-0566">Pantothenate biosynthesis</keyword>
<keyword id="KW-0808">Transferase</keyword>
<gene>
    <name evidence="1" type="primary">panB2</name>
    <name type="ordered locus">Bcen2424_3447</name>
</gene>
<name>PANB2_BURCH</name>
<accession>A0AXR0</accession>
<dbReference type="EC" id="2.1.2.11" evidence="1"/>
<dbReference type="EMBL" id="CP000459">
    <property type="protein sequence ID" value="ABK10186.1"/>
    <property type="molecule type" value="Genomic_DNA"/>
</dbReference>
<dbReference type="SMR" id="A0AXR0"/>
<dbReference type="KEGG" id="bch:Bcen2424_3447"/>
<dbReference type="HOGENOM" id="CLU_036645_1_0_4"/>
<dbReference type="UniPathway" id="UPA00028">
    <property type="reaction ID" value="UER00003"/>
</dbReference>
<dbReference type="GO" id="GO:0005737">
    <property type="term" value="C:cytoplasm"/>
    <property type="evidence" value="ECO:0007669"/>
    <property type="project" value="UniProtKB-SubCell"/>
</dbReference>
<dbReference type="GO" id="GO:0003864">
    <property type="term" value="F:3-methyl-2-oxobutanoate hydroxymethyltransferase activity"/>
    <property type="evidence" value="ECO:0007669"/>
    <property type="project" value="UniProtKB-UniRule"/>
</dbReference>
<dbReference type="GO" id="GO:0000287">
    <property type="term" value="F:magnesium ion binding"/>
    <property type="evidence" value="ECO:0007669"/>
    <property type="project" value="TreeGrafter"/>
</dbReference>
<dbReference type="GO" id="GO:0015940">
    <property type="term" value="P:pantothenate biosynthetic process"/>
    <property type="evidence" value="ECO:0007669"/>
    <property type="project" value="UniProtKB-UniRule"/>
</dbReference>
<dbReference type="CDD" id="cd06557">
    <property type="entry name" value="KPHMT-like"/>
    <property type="match status" value="1"/>
</dbReference>
<dbReference type="FunFam" id="3.20.20.60:FF:000003">
    <property type="entry name" value="3-methyl-2-oxobutanoate hydroxymethyltransferase"/>
    <property type="match status" value="1"/>
</dbReference>
<dbReference type="Gene3D" id="3.20.20.60">
    <property type="entry name" value="Phosphoenolpyruvate-binding domains"/>
    <property type="match status" value="1"/>
</dbReference>
<dbReference type="HAMAP" id="MF_00156">
    <property type="entry name" value="PanB"/>
    <property type="match status" value="1"/>
</dbReference>
<dbReference type="InterPro" id="IPR003700">
    <property type="entry name" value="Pantoate_hydroxy_MeTrfase"/>
</dbReference>
<dbReference type="InterPro" id="IPR015813">
    <property type="entry name" value="Pyrv/PenolPyrv_kinase-like_dom"/>
</dbReference>
<dbReference type="InterPro" id="IPR040442">
    <property type="entry name" value="Pyrv_kinase-like_dom_sf"/>
</dbReference>
<dbReference type="NCBIfam" id="TIGR00222">
    <property type="entry name" value="panB"/>
    <property type="match status" value="1"/>
</dbReference>
<dbReference type="NCBIfam" id="NF001452">
    <property type="entry name" value="PRK00311.1"/>
    <property type="match status" value="1"/>
</dbReference>
<dbReference type="PANTHER" id="PTHR20881">
    <property type="entry name" value="3-METHYL-2-OXOBUTANOATE HYDROXYMETHYLTRANSFERASE"/>
    <property type="match status" value="1"/>
</dbReference>
<dbReference type="PANTHER" id="PTHR20881:SF0">
    <property type="entry name" value="3-METHYL-2-OXOBUTANOATE HYDROXYMETHYLTRANSFERASE"/>
    <property type="match status" value="1"/>
</dbReference>
<dbReference type="Pfam" id="PF02548">
    <property type="entry name" value="Pantoate_transf"/>
    <property type="match status" value="1"/>
</dbReference>
<dbReference type="PIRSF" id="PIRSF000388">
    <property type="entry name" value="Pantoate_hydroxy_MeTrfase"/>
    <property type="match status" value="1"/>
</dbReference>
<dbReference type="SUPFAM" id="SSF51621">
    <property type="entry name" value="Phosphoenolpyruvate/pyruvate domain"/>
    <property type="match status" value="1"/>
</dbReference>
<proteinExistence type="inferred from homology"/>
<reference key="1">
    <citation type="submission" date="2006-08" db="EMBL/GenBank/DDBJ databases">
        <title>Complete sequence of chromosome 2 of Burkholderia cenocepacia HI2424.</title>
        <authorList>
            <person name="Copeland A."/>
            <person name="Lucas S."/>
            <person name="Lapidus A."/>
            <person name="Barry K."/>
            <person name="Detter J.C."/>
            <person name="Glavina del Rio T."/>
            <person name="Hammon N."/>
            <person name="Israni S."/>
            <person name="Pitluck S."/>
            <person name="Chain P."/>
            <person name="Malfatti S."/>
            <person name="Shin M."/>
            <person name="Vergez L."/>
            <person name="Schmutz J."/>
            <person name="Larimer F."/>
            <person name="Land M."/>
            <person name="Hauser L."/>
            <person name="Kyrpides N."/>
            <person name="Kim E."/>
            <person name="LiPuma J.J."/>
            <person name="Gonzalez C.F."/>
            <person name="Konstantinidis K."/>
            <person name="Tiedje J.M."/>
            <person name="Richardson P."/>
        </authorList>
    </citation>
    <scope>NUCLEOTIDE SEQUENCE [LARGE SCALE GENOMIC DNA]</scope>
    <source>
        <strain>HI2424</strain>
    </source>
</reference>
<sequence>MSAHTRITRKTVTAIRSTKGIGSLVSLTAYSAPMAKLVDEVADVIIVGDSVGMVLYGMPDTLRVTLDMMIAHGAAVVRGAAQACVVVDLPFSTFQESPAQAYRSAARLLAETGAQAVKLEGGCEMTDTIRFLTDRGIPVMAHVGLMPQQANAAGGFRAQGMDPRSAAQVFDAACAAERAGAFSVVIEGTAEALARHLTETLTIPTIGIGASPACDGQVLVTEDMIGAFDAYTPRFVKRYADANAVMRDAIRQYAHDVRQRVFPEPAHCFGYGKPLQLADAATAA</sequence>
<evidence type="ECO:0000255" key="1">
    <source>
        <dbReference type="HAMAP-Rule" id="MF_00156"/>
    </source>
</evidence>
<comment type="function">
    <text evidence="1">Catalyzes the reversible reaction in which hydroxymethyl group from 5,10-methylenetetrahydrofolate is transferred onto alpha-ketoisovalerate to form ketopantoate.</text>
</comment>
<comment type="catalytic activity">
    <reaction evidence="1">
        <text>3-methyl-2-oxobutanoate + (6R)-5,10-methylene-5,6,7,8-tetrahydrofolate + H2O = 2-dehydropantoate + (6S)-5,6,7,8-tetrahydrofolate</text>
        <dbReference type="Rhea" id="RHEA:11824"/>
        <dbReference type="ChEBI" id="CHEBI:11561"/>
        <dbReference type="ChEBI" id="CHEBI:11851"/>
        <dbReference type="ChEBI" id="CHEBI:15377"/>
        <dbReference type="ChEBI" id="CHEBI:15636"/>
        <dbReference type="ChEBI" id="CHEBI:57453"/>
        <dbReference type="EC" id="2.1.2.11"/>
    </reaction>
</comment>
<comment type="cofactor">
    <cofactor evidence="1">
        <name>Mg(2+)</name>
        <dbReference type="ChEBI" id="CHEBI:18420"/>
    </cofactor>
    <text evidence="1">Binds 1 Mg(2+) ion per subunit.</text>
</comment>
<comment type="pathway">
    <text evidence="1">Cofactor biosynthesis; (R)-pantothenate biosynthesis; (R)-pantoate from 3-methyl-2-oxobutanoate: step 1/2.</text>
</comment>
<comment type="subunit">
    <text evidence="1">Homodecamer; pentamer of dimers.</text>
</comment>
<comment type="subcellular location">
    <subcellularLocation>
        <location evidence="1">Cytoplasm</location>
    </subcellularLocation>
</comment>
<comment type="similarity">
    <text evidence="1">Belongs to the PanB family.</text>
</comment>
<feature type="chain" id="PRO_0000297230" description="3-methyl-2-oxobutanoate hydroxymethyltransferase 2">
    <location>
        <begin position="1"/>
        <end position="284"/>
    </location>
</feature>
<feature type="active site" description="Proton acceptor" evidence="1">
    <location>
        <position position="187"/>
    </location>
</feature>
<feature type="binding site" evidence="1">
    <location>
        <begin position="49"/>
        <end position="50"/>
    </location>
    <ligand>
        <name>3-methyl-2-oxobutanoate</name>
        <dbReference type="ChEBI" id="CHEBI:11851"/>
    </ligand>
</feature>
<feature type="binding site" evidence="1">
    <location>
        <position position="49"/>
    </location>
    <ligand>
        <name>Mg(2+)</name>
        <dbReference type="ChEBI" id="CHEBI:18420"/>
    </ligand>
</feature>
<feature type="binding site" evidence="1">
    <location>
        <position position="88"/>
    </location>
    <ligand>
        <name>3-methyl-2-oxobutanoate</name>
        <dbReference type="ChEBI" id="CHEBI:11851"/>
    </ligand>
</feature>
<feature type="binding site" evidence="1">
    <location>
        <position position="88"/>
    </location>
    <ligand>
        <name>Mg(2+)</name>
        <dbReference type="ChEBI" id="CHEBI:18420"/>
    </ligand>
</feature>
<feature type="binding site" evidence="1">
    <location>
        <position position="118"/>
    </location>
    <ligand>
        <name>3-methyl-2-oxobutanoate</name>
        <dbReference type="ChEBI" id="CHEBI:11851"/>
    </ligand>
</feature>
<feature type="binding site" evidence="1">
    <location>
        <position position="120"/>
    </location>
    <ligand>
        <name>Mg(2+)</name>
        <dbReference type="ChEBI" id="CHEBI:18420"/>
    </ligand>
</feature>